<organism>
    <name type="scientific">Bombyx mori</name>
    <name type="common">Silk moth</name>
    <dbReference type="NCBI Taxonomy" id="7091"/>
    <lineage>
        <taxon>Eukaryota</taxon>
        <taxon>Metazoa</taxon>
        <taxon>Ecdysozoa</taxon>
        <taxon>Arthropoda</taxon>
        <taxon>Hexapoda</taxon>
        <taxon>Insecta</taxon>
        <taxon>Pterygota</taxon>
        <taxon>Neoptera</taxon>
        <taxon>Endopterygota</taxon>
        <taxon>Lepidoptera</taxon>
        <taxon>Glossata</taxon>
        <taxon>Ditrysia</taxon>
        <taxon>Bombycoidea</taxon>
        <taxon>Bombycidae</taxon>
        <taxon>Bombycinae</taxon>
        <taxon>Bombyx</taxon>
    </lineage>
</organism>
<evidence type="ECO:0000250" key="1">
    <source>
        <dbReference type="UniProtKB" id="P13639"/>
    </source>
</evidence>
<evidence type="ECO:0000250" key="2">
    <source>
        <dbReference type="UniProtKB" id="P32324"/>
    </source>
</evidence>
<evidence type="ECO:0000255" key="3">
    <source>
        <dbReference type="PROSITE-ProRule" id="PRU01059"/>
    </source>
</evidence>
<evidence type="ECO:0000269" key="4">
    <source>
    </source>
</evidence>
<evidence type="ECO:0000305" key="5"/>
<evidence type="ECO:0000312" key="6">
    <source>
        <dbReference type="EMBL" id="ABF51485.1"/>
    </source>
</evidence>
<evidence type="ECO:0000312" key="7">
    <source>
        <dbReference type="EMBL" id="ABF71565.1"/>
    </source>
</evidence>
<feature type="initiator methionine" description="Removed" evidence="1">
    <location>
        <position position="1"/>
    </location>
</feature>
<feature type="chain" id="PRO_0000274546" description="Translation elongation factor 2" evidence="1">
    <location>
        <begin position="2"/>
        <end position="844"/>
    </location>
</feature>
<feature type="domain" description="tr-type G" evidence="3">
    <location>
        <begin position="17"/>
        <end position="348"/>
    </location>
</feature>
<feature type="binding site" evidence="2">
    <location>
        <begin position="26"/>
        <end position="33"/>
    </location>
    <ligand>
        <name>GTP</name>
        <dbReference type="ChEBI" id="CHEBI:37565"/>
    </ligand>
</feature>
<feature type="binding site" evidence="2">
    <location>
        <begin position="162"/>
        <end position="165"/>
    </location>
    <ligand>
        <name>GTP</name>
        <dbReference type="ChEBI" id="CHEBI:37565"/>
    </ligand>
</feature>
<feature type="binding site" evidence="2">
    <location>
        <begin position="219"/>
        <end position="221"/>
    </location>
    <ligand>
        <name>GTP</name>
        <dbReference type="ChEBI" id="CHEBI:37565"/>
    </ligand>
</feature>
<feature type="modified residue" description="Phosphothreonine" evidence="1">
    <location>
        <position position="57"/>
    </location>
</feature>
<feature type="modified residue" description="Phosphothreonine" evidence="1">
    <location>
        <position position="59"/>
    </location>
</feature>
<feature type="modified residue" description="Phosphoserine" evidence="1">
    <location>
        <position position="488"/>
    </location>
</feature>
<feature type="modified residue" description="Diphthamide" evidence="1">
    <location>
        <position position="701"/>
    </location>
</feature>
<feature type="sequence conflict" description="In Ref. 1; ABF71565." evidence="5" ref="1">
    <original>G</original>
    <variation>V</variation>
    <location>
        <position position="216"/>
    </location>
</feature>
<proteinExistence type="evidence at protein level"/>
<comment type="function">
    <text evidence="2">Catalyzes the GTP-dependent ribosomal translocation step during translation elongation. During this step, the ribosome changes from the pre-translocational (PRE) to the post-translocational (POST) state as the newly formed A-site-bound peptidyl-tRNA and P-site-bound deacylated tRNA move to the P and E sites, respectively. Catalyzes the coordinated movement of the two tRNA molecules, the mRNA and conformational changes in the ribosome.</text>
</comment>
<comment type="catalytic activity">
    <reaction evidence="2">
        <text>GTP + H2O = GDP + phosphate + H(+)</text>
        <dbReference type="Rhea" id="RHEA:19669"/>
        <dbReference type="ChEBI" id="CHEBI:15377"/>
        <dbReference type="ChEBI" id="CHEBI:15378"/>
        <dbReference type="ChEBI" id="CHEBI:37565"/>
        <dbReference type="ChEBI" id="CHEBI:43474"/>
        <dbReference type="ChEBI" id="CHEBI:58189"/>
    </reaction>
    <physiologicalReaction direction="left-to-right" evidence="2">
        <dbReference type="Rhea" id="RHEA:19670"/>
    </physiologicalReaction>
</comment>
<comment type="subcellular location">
    <subcellularLocation>
        <location evidence="2">Cytoplasm</location>
    </subcellularLocation>
</comment>
<comment type="PTM">
    <text evidence="1">Phosphorylation by EF-2 kinase completely inactivates EF-2.</text>
</comment>
<comment type="similarity">
    <text evidence="3">Belongs to the TRAFAC class translation factor GTPase superfamily. Classic translation factor GTPase family. EF-G/EF-2 subfamily.</text>
</comment>
<comment type="sequence caution" evidence="5">
    <conflict type="erroneous initiation">
        <sequence resource="EMBL-CDS" id="ABF71565"/>
    </conflict>
</comment>
<gene>
    <name evidence="7" type="primary">tef2</name>
</gene>
<sequence length="844" mass="94784">MVNFTVDEIRGMMDKKRNIRNMSVIAHVDHGKSTLTDSLVSKAGIIAGARAGETRFTDTRKDEQDRCITIKSTAISMFFELEEKDLVFITNPDQREKSEKGFLINLIDSPGHVDFSSEVTAALRVTDGALVVVDCVSGVCVQTETVLRQAIAERIKPILFMNKMDRALLELQLEAEELYQTFQRIVENVNVIIATYNDDGGPMGEVRVDPSKGSVGFGSGLHGWAFTLKQFSEMYADKFKIDLVKLMNRLWGENFFNPQTKKWSKQKDDDNKRSFCMYVLDPIYKVFDAIMKFKKEEIDDLLKKIGVTIKHEDSDKDGKALLKVVMRSWLPAGEALLQMIAIHLPSPVVAQKYRMEMLYEGPHDDEAAIGIKSCDPEAPLMMYVSKMVPTSDKGRFYAFGRVFSGKVVTGQKARIMGPNFTPGKKEDLYEKTIQRTILMMGRYVEAIEDVPSGNICGLVGVDQFLVKTGTITTFKNAHNMKVMKFSVSPVVRVAVEPKNPADLPKLVEGLKRLAKSDPMVQCINEESGEHIVAGAGELHLEICLKDLEEDHACIPIKKSDPVVSYRETVAEESDQLCLSKSPNKHNRLFMKAQPMPDGLPEDIDEGRVNPRDDFKTRARYLTEKYEYDVTEARKIWCFGPEGTGPNILVDCSKGVQYLNEIKDSVVAGFQWAAKEGVMAEENLRGVRFNIYDVTLHTDAIHRGGGQIIPTTRRCLYACLLTAQPRLMEPVYLCEIQCPEVAVGGIYGVLNRRRGHVFEESQVAGTPMFIVKAYLPVNESFGFTADLRSNTGGQAFPQCVFDHWQVLPGDPCEPQSKPYNVVQETRKRKGLKEGLPDLTQYLDKL</sequence>
<name>EF2_BOMMO</name>
<keyword id="KW-0963">Cytoplasm</keyword>
<keyword id="KW-0903">Direct protein sequencing</keyword>
<keyword id="KW-0251">Elongation factor</keyword>
<keyword id="KW-0342">GTP-binding</keyword>
<keyword id="KW-0378">Hydrolase</keyword>
<keyword id="KW-0547">Nucleotide-binding</keyword>
<keyword id="KW-0597">Phosphoprotein</keyword>
<keyword id="KW-0648">Protein biosynthesis</keyword>
<keyword id="KW-1185">Reference proteome</keyword>
<accession>Q1HPK6</accession>
<accession>P82216</accession>
<accession>Q19P05</accession>
<reference evidence="6" key="1">
    <citation type="submission" date="2006-04" db="EMBL/GenBank/DDBJ databases">
        <title>Cloning of Bombyx mori translation elongation factor 2 gene.</title>
        <authorList>
            <person name="Gao L."/>
            <person name="Chen K.P."/>
            <person name="Yao Q."/>
            <person name="Chen H.Q."/>
        </authorList>
    </citation>
    <scope>NUCLEOTIDE SEQUENCE [MRNA]</scope>
    <source>
        <strain evidence="7">306</strain>
        <tissue evidence="7">Midgut</tissue>
    </source>
</reference>
<reference evidence="6" key="2">
    <citation type="submission" date="2006-03" db="EMBL/GenBank/DDBJ databases">
        <title>Blast silkworm EST database for functional genes.</title>
        <authorList>
            <person name="Niu B.L."/>
            <person name="Meng Z.Q."/>
            <person name="Weng H.B."/>
            <person name="Shen W.F."/>
            <person name="He L.H."/>
            <person name="Zheng K.F."/>
            <person name="Ye S.T."/>
            <person name="Lin T.B."/>
            <person name="Chen J.E."/>
        </authorList>
    </citation>
    <scope>NUCLEOTIDE SEQUENCE [LARGE SCALE MRNA]</scope>
</reference>
<reference evidence="5" key="3">
    <citation type="journal article" date="2001" name="Yi Chuan Xue Bao">
        <title>Protein database for several tissues derived from five instar of silkworm.</title>
        <authorList>
            <person name="Zhong B.-X."/>
        </authorList>
    </citation>
    <scope>PROTEIN SEQUENCE OF 558-571</scope>
    <source>
        <strain evidence="4">Xinhang X Keming</strain>
        <tissue evidence="4">Body wall</tissue>
        <tissue evidence="4">Fat body</tissue>
    </source>
</reference>
<dbReference type="EC" id="3.6.5.-" evidence="2"/>
<dbReference type="EMBL" id="DQ515926">
    <property type="protein sequence ID" value="ABF71565.1"/>
    <property type="status" value="ALT_INIT"/>
    <property type="molecule type" value="mRNA"/>
</dbReference>
<dbReference type="EMBL" id="DQ443396">
    <property type="protein sequence ID" value="ABF51485.1"/>
    <property type="molecule type" value="mRNA"/>
</dbReference>
<dbReference type="RefSeq" id="NP_001037593.1">
    <property type="nucleotide sequence ID" value="NM_001044128.2"/>
</dbReference>
<dbReference type="RefSeq" id="NP_001163865.1">
    <property type="nucleotide sequence ID" value="NM_001170394.1"/>
</dbReference>
<dbReference type="SMR" id="Q1HPK6"/>
<dbReference type="FunCoup" id="Q1HPK6">
    <property type="interactions" value="1243"/>
</dbReference>
<dbReference type="IntAct" id="Q1HPK6">
    <property type="interactions" value="1"/>
</dbReference>
<dbReference type="MINT" id="Q1HPK6"/>
<dbReference type="STRING" id="7091.Q1HPK6"/>
<dbReference type="PaxDb" id="7091-BGIBMGA004165-TA"/>
<dbReference type="EnsemblMetazoa" id="NM_001170394.1">
    <property type="protein sequence ID" value="NP_001163865.1"/>
    <property type="gene ID" value="GeneID_733027"/>
</dbReference>
<dbReference type="GeneID" id="733027"/>
<dbReference type="KEGG" id="bmor:733027"/>
<dbReference type="CTD" id="1938"/>
<dbReference type="eggNOG" id="KOG0469">
    <property type="taxonomic scope" value="Eukaryota"/>
</dbReference>
<dbReference type="HOGENOM" id="CLU_002794_11_2_1"/>
<dbReference type="InParanoid" id="Q1HPK6"/>
<dbReference type="OrthoDB" id="547046at7088"/>
<dbReference type="Proteomes" id="UP000005204">
    <property type="component" value="Unassembled WGS sequence"/>
</dbReference>
<dbReference type="GO" id="GO:0005829">
    <property type="term" value="C:cytosol"/>
    <property type="evidence" value="ECO:0007669"/>
    <property type="project" value="TreeGrafter"/>
</dbReference>
<dbReference type="GO" id="GO:1990904">
    <property type="term" value="C:ribonucleoprotein complex"/>
    <property type="evidence" value="ECO:0007669"/>
    <property type="project" value="TreeGrafter"/>
</dbReference>
<dbReference type="GO" id="GO:0005525">
    <property type="term" value="F:GTP binding"/>
    <property type="evidence" value="ECO:0007669"/>
    <property type="project" value="UniProtKB-KW"/>
</dbReference>
<dbReference type="GO" id="GO:0003924">
    <property type="term" value="F:GTPase activity"/>
    <property type="evidence" value="ECO:0007669"/>
    <property type="project" value="InterPro"/>
</dbReference>
<dbReference type="GO" id="GO:0043022">
    <property type="term" value="F:ribosome binding"/>
    <property type="evidence" value="ECO:0007669"/>
    <property type="project" value="TreeGrafter"/>
</dbReference>
<dbReference type="GO" id="GO:0003746">
    <property type="term" value="F:translation elongation factor activity"/>
    <property type="evidence" value="ECO:0007669"/>
    <property type="project" value="UniProtKB-KW"/>
</dbReference>
<dbReference type="CDD" id="cd01681">
    <property type="entry name" value="aeEF2_snRNP_like_IV"/>
    <property type="match status" value="1"/>
</dbReference>
<dbReference type="CDD" id="cd04096">
    <property type="entry name" value="eEF2_snRNP_like_C"/>
    <property type="match status" value="1"/>
</dbReference>
<dbReference type="CDD" id="cd01885">
    <property type="entry name" value="EF2"/>
    <property type="match status" value="1"/>
</dbReference>
<dbReference type="CDD" id="cd16261">
    <property type="entry name" value="EF2_snRNP_III"/>
    <property type="match status" value="1"/>
</dbReference>
<dbReference type="CDD" id="cd03700">
    <property type="entry name" value="EF2_snRNP_like_II"/>
    <property type="match status" value="1"/>
</dbReference>
<dbReference type="FunFam" id="3.90.1430.10:FF:000003">
    <property type="entry name" value="Elongation factor 2"/>
    <property type="match status" value="1"/>
</dbReference>
<dbReference type="FunFam" id="2.40.30.10:FF:000010">
    <property type="entry name" value="Translation elongation factor 2"/>
    <property type="match status" value="1"/>
</dbReference>
<dbReference type="FunFam" id="3.30.230.10:FF:000006">
    <property type="entry name" value="Translation elongation factor 2"/>
    <property type="match status" value="1"/>
</dbReference>
<dbReference type="FunFam" id="3.30.70.240:FF:000003">
    <property type="entry name" value="Translation elongation factor 2"/>
    <property type="match status" value="1"/>
</dbReference>
<dbReference type="FunFam" id="3.30.70.870:FF:000002">
    <property type="entry name" value="Translation elongation factor 2"/>
    <property type="match status" value="1"/>
</dbReference>
<dbReference type="FunFam" id="3.40.50.300:FF:000058">
    <property type="entry name" value="Translation elongation factor 2"/>
    <property type="match status" value="1"/>
</dbReference>
<dbReference type="Gene3D" id="3.30.230.10">
    <property type="match status" value="1"/>
</dbReference>
<dbReference type="Gene3D" id="3.30.70.240">
    <property type="match status" value="1"/>
</dbReference>
<dbReference type="Gene3D" id="3.30.70.870">
    <property type="entry name" value="Elongation Factor G (Translational Gtpase), domain 3"/>
    <property type="match status" value="1"/>
</dbReference>
<dbReference type="Gene3D" id="3.40.50.300">
    <property type="entry name" value="P-loop containing nucleotide triphosphate hydrolases"/>
    <property type="match status" value="1"/>
</dbReference>
<dbReference type="Gene3D" id="2.40.30.10">
    <property type="entry name" value="Translation factors"/>
    <property type="match status" value="1"/>
</dbReference>
<dbReference type="Gene3D" id="3.90.1430.10">
    <property type="entry name" value="Yeast translation eEF2 (G' domain)"/>
    <property type="match status" value="1"/>
</dbReference>
<dbReference type="InterPro" id="IPR041095">
    <property type="entry name" value="EFG_II"/>
</dbReference>
<dbReference type="InterPro" id="IPR035647">
    <property type="entry name" value="EFG_III/V"/>
</dbReference>
<dbReference type="InterPro" id="IPR000640">
    <property type="entry name" value="EFG_V-like"/>
</dbReference>
<dbReference type="InterPro" id="IPR004161">
    <property type="entry name" value="EFTu-like_2"/>
</dbReference>
<dbReference type="InterPro" id="IPR031157">
    <property type="entry name" value="G_TR_CS"/>
</dbReference>
<dbReference type="InterPro" id="IPR027417">
    <property type="entry name" value="P-loop_NTPase"/>
</dbReference>
<dbReference type="InterPro" id="IPR020568">
    <property type="entry name" value="Ribosomal_Su5_D2-typ_SF"/>
</dbReference>
<dbReference type="InterPro" id="IPR014721">
    <property type="entry name" value="Ribsml_uS5_D2-typ_fold_subgr"/>
</dbReference>
<dbReference type="InterPro" id="IPR005225">
    <property type="entry name" value="Small_GTP-bd"/>
</dbReference>
<dbReference type="InterPro" id="IPR000795">
    <property type="entry name" value="T_Tr_GTP-bd_dom"/>
</dbReference>
<dbReference type="InterPro" id="IPR009000">
    <property type="entry name" value="Transl_B-barrel_sf"/>
</dbReference>
<dbReference type="InterPro" id="IPR005517">
    <property type="entry name" value="Transl_elong_EFG/EF2_IV"/>
</dbReference>
<dbReference type="NCBIfam" id="TIGR00231">
    <property type="entry name" value="small_GTP"/>
    <property type="match status" value="1"/>
</dbReference>
<dbReference type="PANTHER" id="PTHR42908:SF10">
    <property type="entry name" value="EUKARYOTIC TRANSLATION ELONGATION FACTOR 2"/>
    <property type="match status" value="1"/>
</dbReference>
<dbReference type="PANTHER" id="PTHR42908">
    <property type="entry name" value="TRANSLATION ELONGATION FACTOR-RELATED"/>
    <property type="match status" value="1"/>
</dbReference>
<dbReference type="Pfam" id="PF00679">
    <property type="entry name" value="EFG_C"/>
    <property type="match status" value="1"/>
</dbReference>
<dbReference type="Pfam" id="PF14492">
    <property type="entry name" value="EFG_III"/>
    <property type="match status" value="1"/>
</dbReference>
<dbReference type="Pfam" id="PF03764">
    <property type="entry name" value="EFG_IV"/>
    <property type="match status" value="1"/>
</dbReference>
<dbReference type="Pfam" id="PF00009">
    <property type="entry name" value="GTP_EFTU"/>
    <property type="match status" value="1"/>
</dbReference>
<dbReference type="Pfam" id="PF03144">
    <property type="entry name" value="GTP_EFTU_D2"/>
    <property type="match status" value="1"/>
</dbReference>
<dbReference type="PRINTS" id="PR00315">
    <property type="entry name" value="ELONGATNFCT"/>
</dbReference>
<dbReference type="SMART" id="SM00838">
    <property type="entry name" value="EFG_C"/>
    <property type="match status" value="1"/>
</dbReference>
<dbReference type="SMART" id="SM00889">
    <property type="entry name" value="EFG_IV"/>
    <property type="match status" value="1"/>
</dbReference>
<dbReference type="SUPFAM" id="SSF54980">
    <property type="entry name" value="EF-G C-terminal domain-like"/>
    <property type="match status" value="2"/>
</dbReference>
<dbReference type="SUPFAM" id="SSF52540">
    <property type="entry name" value="P-loop containing nucleoside triphosphate hydrolases"/>
    <property type="match status" value="1"/>
</dbReference>
<dbReference type="SUPFAM" id="SSF54211">
    <property type="entry name" value="Ribosomal protein S5 domain 2-like"/>
    <property type="match status" value="1"/>
</dbReference>
<dbReference type="SUPFAM" id="SSF50447">
    <property type="entry name" value="Translation proteins"/>
    <property type="match status" value="1"/>
</dbReference>
<dbReference type="PROSITE" id="PS00301">
    <property type="entry name" value="G_TR_1"/>
    <property type="match status" value="1"/>
</dbReference>
<dbReference type="PROSITE" id="PS51722">
    <property type="entry name" value="G_TR_2"/>
    <property type="match status" value="1"/>
</dbReference>
<protein>
    <recommendedName>
        <fullName>Translation elongation factor 2</fullName>
        <shortName>EF-2</shortName>
        <ecNumber evidence="2">3.6.5.-</ecNumber>
    </recommendedName>
</protein>